<protein>
    <recommendedName>
        <fullName>31 kDa ribonucleoprotein, chloroplastic</fullName>
    </recommendedName>
</protein>
<dbReference type="EMBL" id="X53942">
    <property type="protein sequence ID" value="CAA37885.1"/>
    <property type="molecule type" value="mRNA"/>
</dbReference>
<dbReference type="EMBL" id="X57079">
    <property type="protein sequence ID" value="CAA40364.1"/>
    <property type="molecule type" value="Genomic_DNA"/>
</dbReference>
<dbReference type="PIR" id="S22548">
    <property type="entry name" value="S22548"/>
</dbReference>
<dbReference type="RefSeq" id="NP_001412422.1">
    <property type="nucleotide sequence ID" value="NM_001425493.1"/>
</dbReference>
<dbReference type="RefSeq" id="XP_009777467.1">
    <property type="nucleotide sequence ID" value="XM_009779165.1"/>
</dbReference>
<dbReference type="SMR" id="P19683"/>
<dbReference type="STRING" id="4096.P19683"/>
<dbReference type="GeneID" id="104227036"/>
<dbReference type="eggNOG" id="KOG0118">
    <property type="taxonomic scope" value="Eukaryota"/>
</dbReference>
<dbReference type="Proteomes" id="UP000189701">
    <property type="component" value="Unplaced"/>
</dbReference>
<dbReference type="GO" id="GO:0009535">
    <property type="term" value="C:chloroplast thylakoid membrane"/>
    <property type="evidence" value="ECO:0007669"/>
    <property type="project" value="TreeGrafter"/>
</dbReference>
<dbReference type="GO" id="GO:1990904">
    <property type="term" value="C:ribonucleoprotein complex"/>
    <property type="evidence" value="ECO:0007669"/>
    <property type="project" value="UniProtKB-KW"/>
</dbReference>
<dbReference type="GO" id="GO:0003729">
    <property type="term" value="F:mRNA binding"/>
    <property type="evidence" value="ECO:0007669"/>
    <property type="project" value="TreeGrafter"/>
</dbReference>
<dbReference type="GO" id="GO:1901259">
    <property type="term" value="P:chloroplast rRNA processing"/>
    <property type="evidence" value="ECO:0007669"/>
    <property type="project" value="TreeGrafter"/>
</dbReference>
<dbReference type="GO" id="GO:0006397">
    <property type="term" value="P:mRNA processing"/>
    <property type="evidence" value="ECO:0007669"/>
    <property type="project" value="UniProtKB-KW"/>
</dbReference>
<dbReference type="CDD" id="cd21608">
    <property type="entry name" value="RRM2_NsCP33_like"/>
    <property type="match status" value="1"/>
</dbReference>
<dbReference type="FunFam" id="3.30.70.330:FF:000268">
    <property type="entry name" value="31 kDa ribonucleoprotein, chloroplastic"/>
    <property type="match status" value="1"/>
</dbReference>
<dbReference type="Gene3D" id="3.30.70.330">
    <property type="match status" value="2"/>
</dbReference>
<dbReference type="InterPro" id="IPR050502">
    <property type="entry name" value="Euk_RNA-bind_prot"/>
</dbReference>
<dbReference type="InterPro" id="IPR012677">
    <property type="entry name" value="Nucleotide-bd_a/b_plait_sf"/>
</dbReference>
<dbReference type="InterPro" id="IPR035979">
    <property type="entry name" value="RBD_domain_sf"/>
</dbReference>
<dbReference type="InterPro" id="IPR048289">
    <property type="entry name" value="RRM2_NsCP33-like"/>
</dbReference>
<dbReference type="InterPro" id="IPR000504">
    <property type="entry name" value="RRM_dom"/>
</dbReference>
<dbReference type="PANTHER" id="PTHR48025:SF23">
    <property type="entry name" value="31 KDA RIBONUCLEOPROTEIN, CHLOROPLASTIC"/>
    <property type="match status" value="1"/>
</dbReference>
<dbReference type="PANTHER" id="PTHR48025">
    <property type="entry name" value="OS02G0815200 PROTEIN"/>
    <property type="match status" value="1"/>
</dbReference>
<dbReference type="Pfam" id="PF00076">
    <property type="entry name" value="RRM_1"/>
    <property type="match status" value="2"/>
</dbReference>
<dbReference type="SMART" id="SM00360">
    <property type="entry name" value="RRM"/>
    <property type="match status" value="2"/>
</dbReference>
<dbReference type="SUPFAM" id="SSF54928">
    <property type="entry name" value="RNA-binding domain, RBD"/>
    <property type="match status" value="2"/>
</dbReference>
<dbReference type="PROSITE" id="PS50102">
    <property type="entry name" value="RRM"/>
    <property type="match status" value="2"/>
</dbReference>
<organism>
    <name type="scientific">Nicotiana sylvestris</name>
    <name type="common">Wood tobacco</name>
    <name type="synonym">South American tobacco</name>
    <dbReference type="NCBI Taxonomy" id="4096"/>
    <lineage>
        <taxon>Eukaryota</taxon>
        <taxon>Viridiplantae</taxon>
        <taxon>Streptophyta</taxon>
        <taxon>Embryophyta</taxon>
        <taxon>Tracheophyta</taxon>
        <taxon>Spermatophyta</taxon>
        <taxon>Magnoliopsida</taxon>
        <taxon>eudicotyledons</taxon>
        <taxon>Gunneridae</taxon>
        <taxon>Pentapetalae</taxon>
        <taxon>asterids</taxon>
        <taxon>lamiids</taxon>
        <taxon>Solanales</taxon>
        <taxon>Solanaceae</taxon>
        <taxon>Nicotianoideae</taxon>
        <taxon>Nicotianeae</taxon>
        <taxon>Nicotiana</taxon>
    </lineage>
</organism>
<sequence>MSCATKPIIKPSSMATNSCLISLPPLFATTTKSKSFAYPYLSNTLKPIKLLHLSCTYSPCILSPKKKTSVSALQEEENTLILDGQGQESGDLFNFEPSGEETEEEGFVEAVGDAGESDEVEADEEEEEFQEPPEDAKLFVGNLPYDVDSEGLARLFEQAGVVEIAEVIYNRDTDQSRGFGFVTMSTVEEAEKAVEMYNRYDVNGRLLTVNKAARRGERPERPPRTFEQSYRIYVGNIPWGIDDARLEQLFSEHGKVVSARVVYDRETGRSRGFGFVTMASEAEMSDAIANLDGQSLDGRTIRVNVAEDRSRRNTF</sequence>
<proteinExistence type="evidence at protein level"/>
<name>ROC4_NICSY</name>
<reference key="1">
    <citation type="journal article" date="1990" name="EMBO J.">
        <title>Three distinct ribonucleoproteins from tobacco chloroplasts: each contains a unique amino terminal acidic domain and two ribonucleoprotein consensus motifs.</title>
        <authorList>
            <person name="Li Y."/>
            <person name="Sugiura M."/>
        </authorList>
    </citation>
    <scope>NUCLEOTIDE SEQUENCE [MRNA]</scope>
    <scope>PROTEIN SEQUENCE OF 72-101</scope>
    <source>
        <strain>cv. Bright Yellow 4</strain>
    </source>
</reference>
<reference key="2">
    <citation type="journal article" date="1991" name="Nucleic Acids Res.">
        <title>Tobacco nuclear gene for the 31 kd chloroplast ribonucleoprotein: genomic organization, sequence analysis and expression.</title>
        <authorList>
            <person name="Li Y."/>
            <person name="Ye L."/>
            <person name="Sugita M."/>
            <person name="Suguira M."/>
        </authorList>
    </citation>
    <scope>NUCLEOTIDE SEQUENCE [GENOMIC DNA]</scope>
</reference>
<comment type="function">
    <text>Could be involved in splicing and/or processing of chloroplast RNA's.</text>
</comment>
<comment type="subcellular location">
    <subcellularLocation>
        <location>Plastid</location>
        <location>Chloroplast</location>
    </subcellularLocation>
</comment>
<accession>P19683</accession>
<evidence type="ECO:0000255" key="1">
    <source>
        <dbReference type="PROSITE-ProRule" id="PRU00176"/>
    </source>
</evidence>
<evidence type="ECO:0000256" key="2">
    <source>
        <dbReference type="SAM" id="MobiDB-lite"/>
    </source>
</evidence>
<evidence type="ECO:0000269" key="3">
    <source>
    </source>
</evidence>
<keyword id="KW-0150">Chloroplast</keyword>
<keyword id="KW-0903">Direct protein sequencing</keyword>
<keyword id="KW-0507">mRNA processing</keyword>
<keyword id="KW-0934">Plastid</keyword>
<keyword id="KW-1185">Reference proteome</keyword>
<keyword id="KW-0677">Repeat</keyword>
<keyword id="KW-0687">Ribonucleoprotein</keyword>
<keyword id="KW-0694">RNA-binding</keyword>
<keyword id="KW-0809">Transit peptide</keyword>
<feature type="transit peptide" description="Chloroplast" evidence="3">
    <location>
        <begin position="1"/>
        <end position="71"/>
    </location>
</feature>
<feature type="chain" id="PRO_0000031029" description="31 kDa ribonucleoprotein, chloroplastic">
    <location>
        <begin position="72"/>
        <end position="315"/>
    </location>
</feature>
<feature type="domain" description="RRM 1" evidence="1">
    <location>
        <begin position="136"/>
        <end position="214"/>
    </location>
</feature>
<feature type="domain" description="RRM 2" evidence="1">
    <location>
        <begin position="230"/>
        <end position="308"/>
    </location>
</feature>
<feature type="region of interest" description="Disordered" evidence="2">
    <location>
        <begin position="114"/>
        <end position="133"/>
    </location>
</feature>
<feature type="compositionally biased region" description="Acidic residues" evidence="2">
    <location>
        <begin position="115"/>
        <end position="133"/>
    </location>
</feature>